<organism>
    <name type="scientific">Helicobacter pylori (strain Shi470)</name>
    <dbReference type="NCBI Taxonomy" id="512562"/>
    <lineage>
        <taxon>Bacteria</taxon>
        <taxon>Pseudomonadati</taxon>
        <taxon>Campylobacterota</taxon>
        <taxon>Epsilonproteobacteria</taxon>
        <taxon>Campylobacterales</taxon>
        <taxon>Helicobacteraceae</taxon>
        <taxon>Helicobacter</taxon>
    </lineage>
</organism>
<name>UREG_HELPS</name>
<protein>
    <recommendedName>
        <fullName evidence="1">Urease accessory protein UreG</fullName>
    </recommendedName>
</protein>
<sequence>MVKIGVCGPVGSGKTALIEALTRHMSKDYDMAVITNDIYTKEDAEFMCKNSVMPRDRIIGVETGGCPHTAIREDASMNLEAVEEMHGRFPNLELLLIESGGDNLSATFNPELADFTIFVIDVAEGDKIPRKGGPGITRSDLLVINKIDLAPYVGADLKVMERDSKKMRGEKPFIFTNIRAKEGLDDVIAWIKRNALLED</sequence>
<comment type="function">
    <text evidence="1">Facilitates the functional incorporation of the urease nickel metallocenter. This process requires GTP hydrolysis, probably effectuated by UreG.</text>
</comment>
<comment type="subunit">
    <text evidence="1">Homodimer. UreH, UreF and UreG form a complex that acts as a GTP-hydrolysis-dependent molecular chaperone, activating the urease apoprotein by helping to assemble the nickel containing metallocenter of UreC. The UreE protein probably delivers the nickel.</text>
</comment>
<comment type="subcellular location">
    <subcellularLocation>
        <location evidence="1">Cytoplasm</location>
    </subcellularLocation>
</comment>
<comment type="similarity">
    <text evidence="1">Belongs to the SIMIBI class G3E GTPase family. UreG subfamily.</text>
</comment>
<accession>B2UW65</accession>
<reference key="1">
    <citation type="submission" date="2008-05" db="EMBL/GenBank/DDBJ databases">
        <title>Genome sequence of Helicobacter pylori from the remote Amazon: traces of Asian ancestry of the first Americans.</title>
        <authorList>
            <person name="Kersulyte D."/>
            <person name="Kalia A."/>
            <person name="Gilman R.H."/>
            <person name="Berg D.E."/>
        </authorList>
    </citation>
    <scope>NUCLEOTIDE SEQUENCE [LARGE SCALE GENOMIC DNA]</scope>
    <source>
        <strain>Shi470</strain>
    </source>
</reference>
<dbReference type="EMBL" id="CP001072">
    <property type="protein sequence ID" value="ACD47530.1"/>
    <property type="molecule type" value="Genomic_DNA"/>
</dbReference>
<dbReference type="RefSeq" id="WP_000238747.1">
    <property type="nucleotide sequence ID" value="NC_010698.2"/>
</dbReference>
<dbReference type="SMR" id="B2UW65"/>
<dbReference type="GeneID" id="93236439"/>
<dbReference type="KEGG" id="hps:HPSH_00325"/>
<dbReference type="HOGENOM" id="CLU_072144_1_0_7"/>
<dbReference type="GO" id="GO:0005737">
    <property type="term" value="C:cytoplasm"/>
    <property type="evidence" value="ECO:0007669"/>
    <property type="project" value="UniProtKB-SubCell"/>
</dbReference>
<dbReference type="GO" id="GO:0005525">
    <property type="term" value="F:GTP binding"/>
    <property type="evidence" value="ECO:0007669"/>
    <property type="project" value="UniProtKB-KW"/>
</dbReference>
<dbReference type="GO" id="GO:0003924">
    <property type="term" value="F:GTPase activity"/>
    <property type="evidence" value="ECO:0007669"/>
    <property type="project" value="InterPro"/>
</dbReference>
<dbReference type="GO" id="GO:0016151">
    <property type="term" value="F:nickel cation binding"/>
    <property type="evidence" value="ECO:0007669"/>
    <property type="project" value="InterPro"/>
</dbReference>
<dbReference type="GO" id="GO:0043419">
    <property type="term" value="P:urea catabolic process"/>
    <property type="evidence" value="ECO:0007669"/>
    <property type="project" value="InterPro"/>
</dbReference>
<dbReference type="CDD" id="cd05540">
    <property type="entry name" value="UreG"/>
    <property type="match status" value="1"/>
</dbReference>
<dbReference type="FunFam" id="3.40.50.300:FF:000208">
    <property type="entry name" value="Urease accessory protein UreG"/>
    <property type="match status" value="1"/>
</dbReference>
<dbReference type="Gene3D" id="3.40.50.300">
    <property type="entry name" value="P-loop containing nucleotide triphosphate hydrolases"/>
    <property type="match status" value="1"/>
</dbReference>
<dbReference type="HAMAP" id="MF_01389">
    <property type="entry name" value="UreG"/>
    <property type="match status" value="1"/>
</dbReference>
<dbReference type="InterPro" id="IPR003495">
    <property type="entry name" value="CobW/HypB/UreG_nucleotide-bd"/>
</dbReference>
<dbReference type="InterPro" id="IPR027417">
    <property type="entry name" value="P-loop_NTPase"/>
</dbReference>
<dbReference type="InterPro" id="IPR004400">
    <property type="entry name" value="UreG"/>
</dbReference>
<dbReference type="NCBIfam" id="TIGR00101">
    <property type="entry name" value="ureG"/>
    <property type="match status" value="1"/>
</dbReference>
<dbReference type="PANTHER" id="PTHR31715">
    <property type="entry name" value="UREASE ACCESSORY PROTEIN G"/>
    <property type="match status" value="1"/>
</dbReference>
<dbReference type="PANTHER" id="PTHR31715:SF0">
    <property type="entry name" value="UREASE ACCESSORY PROTEIN G"/>
    <property type="match status" value="1"/>
</dbReference>
<dbReference type="Pfam" id="PF02492">
    <property type="entry name" value="cobW"/>
    <property type="match status" value="1"/>
</dbReference>
<dbReference type="PIRSF" id="PIRSF005624">
    <property type="entry name" value="Ni-bind_GTPase"/>
    <property type="match status" value="1"/>
</dbReference>
<dbReference type="SUPFAM" id="SSF52540">
    <property type="entry name" value="P-loop containing nucleoside triphosphate hydrolases"/>
    <property type="match status" value="1"/>
</dbReference>
<evidence type="ECO:0000255" key="1">
    <source>
        <dbReference type="HAMAP-Rule" id="MF_01389"/>
    </source>
</evidence>
<feature type="chain" id="PRO_1000145181" description="Urease accessory protein UreG">
    <location>
        <begin position="1"/>
        <end position="199"/>
    </location>
</feature>
<feature type="binding site" evidence="1">
    <location>
        <begin position="8"/>
        <end position="15"/>
    </location>
    <ligand>
        <name>GTP</name>
        <dbReference type="ChEBI" id="CHEBI:37565"/>
    </ligand>
</feature>
<gene>
    <name evidence="1" type="primary">ureG</name>
    <name type="ordered locus">HPSH_00325</name>
</gene>
<keyword id="KW-0143">Chaperone</keyword>
<keyword id="KW-0963">Cytoplasm</keyword>
<keyword id="KW-0342">GTP-binding</keyword>
<keyword id="KW-0996">Nickel insertion</keyword>
<keyword id="KW-0547">Nucleotide-binding</keyword>
<proteinExistence type="inferred from homology"/>